<gene>
    <name evidence="1" type="primary">rpmF</name>
    <name type="ordered locus">Mfla_1509</name>
</gene>
<dbReference type="EMBL" id="CP000284">
    <property type="protein sequence ID" value="ABE49777.1"/>
    <property type="molecule type" value="Genomic_DNA"/>
</dbReference>
<dbReference type="RefSeq" id="WP_011479731.1">
    <property type="nucleotide sequence ID" value="NC_007947.1"/>
</dbReference>
<dbReference type="SMR" id="Q1H160"/>
<dbReference type="STRING" id="265072.Mfla_1509"/>
<dbReference type="KEGG" id="mfa:Mfla_1509"/>
<dbReference type="eggNOG" id="COG0333">
    <property type="taxonomic scope" value="Bacteria"/>
</dbReference>
<dbReference type="HOGENOM" id="CLU_129084_2_1_4"/>
<dbReference type="OrthoDB" id="9801927at2"/>
<dbReference type="Proteomes" id="UP000002440">
    <property type="component" value="Chromosome"/>
</dbReference>
<dbReference type="GO" id="GO:0015934">
    <property type="term" value="C:large ribosomal subunit"/>
    <property type="evidence" value="ECO:0007669"/>
    <property type="project" value="InterPro"/>
</dbReference>
<dbReference type="GO" id="GO:0003735">
    <property type="term" value="F:structural constituent of ribosome"/>
    <property type="evidence" value="ECO:0007669"/>
    <property type="project" value="InterPro"/>
</dbReference>
<dbReference type="GO" id="GO:0006412">
    <property type="term" value="P:translation"/>
    <property type="evidence" value="ECO:0007669"/>
    <property type="project" value="UniProtKB-UniRule"/>
</dbReference>
<dbReference type="HAMAP" id="MF_00340">
    <property type="entry name" value="Ribosomal_bL32"/>
    <property type="match status" value="1"/>
</dbReference>
<dbReference type="InterPro" id="IPR002677">
    <property type="entry name" value="Ribosomal_bL32"/>
</dbReference>
<dbReference type="InterPro" id="IPR044957">
    <property type="entry name" value="Ribosomal_bL32_bact"/>
</dbReference>
<dbReference type="InterPro" id="IPR011332">
    <property type="entry name" value="Ribosomal_zn-bd"/>
</dbReference>
<dbReference type="NCBIfam" id="TIGR01031">
    <property type="entry name" value="rpmF_bact"/>
    <property type="match status" value="1"/>
</dbReference>
<dbReference type="PANTHER" id="PTHR35534">
    <property type="entry name" value="50S RIBOSOMAL PROTEIN L32"/>
    <property type="match status" value="1"/>
</dbReference>
<dbReference type="PANTHER" id="PTHR35534:SF1">
    <property type="entry name" value="LARGE RIBOSOMAL SUBUNIT PROTEIN BL32"/>
    <property type="match status" value="1"/>
</dbReference>
<dbReference type="Pfam" id="PF01783">
    <property type="entry name" value="Ribosomal_L32p"/>
    <property type="match status" value="1"/>
</dbReference>
<dbReference type="SUPFAM" id="SSF57829">
    <property type="entry name" value="Zn-binding ribosomal proteins"/>
    <property type="match status" value="1"/>
</dbReference>
<comment type="similarity">
    <text evidence="1">Belongs to the bacterial ribosomal protein bL32 family.</text>
</comment>
<feature type="chain" id="PRO_0000296501" description="Large ribosomal subunit protein bL32">
    <location>
        <begin position="1"/>
        <end position="59"/>
    </location>
</feature>
<feature type="region of interest" description="Disordered" evidence="2">
    <location>
        <begin position="1"/>
        <end position="59"/>
    </location>
</feature>
<feature type="compositionally biased region" description="Basic residues" evidence="2">
    <location>
        <begin position="49"/>
        <end position="59"/>
    </location>
</feature>
<organism>
    <name type="scientific">Methylobacillus flagellatus (strain ATCC 51484 / DSM 6875 / VKM B-1610 / KT)</name>
    <dbReference type="NCBI Taxonomy" id="265072"/>
    <lineage>
        <taxon>Bacteria</taxon>
        <taxon>Pseudomonadati</taxon>
        <taxon>Pseudomonadota</taxon>
        <taxon>Betaproteobacteria</taxon>
        <taxon>Nitrosomonadales</taxon>
        <taxon>Methylophilaceae</taxon>
        <taxon>Methylobacillus</taxon>
    </lineage>
</organism>
<accession>Q1H160</accession>
<protein>
    <recommendedName>
        <fullName evidence="1">Large ribosomal subunit protein bL32</fullName>
    </recommendedName>
    <alternativeName>
        <fullName evidence="3">50S ribosomal protein L32</fullName>
    </alternativeName>
</protein>
<name>RL32_METFK</name>
<sequence>MAVQQNKKSPSKRGMHRSHDFLTNPPLAVEPTSGEIHLRHHVSPNGYYRGRKVLPAKGE</sequence>
<evidence type="ECO:0000255" key="1">
    <source>
        <dbReference type="HAMAP-Rule" id="MF_00340"/>
    </source>
</evidence>
<evidence type="ECO:0000256" key="2">
    <source>
        <dbReference type="SAM" id="MobiDB-lite"/>
    </source>
</evidence>
<evidence type="ECO:0000305" key="3"/>
<proteinExistence type="inferred from homology"/>
<keyword id="KW-1185">Reference proteome</keyword>
<keyword id="KW-0687">Ribonucleoprotein</keyword>
<keyword id="KW-0689">Ribosomal protein</keyword>
<reference key="1">
    <citation type="submission" date="2006-03" db="EMBL/GenBank/DDBJ databases">
        <title>Complete sequence of Methylobacillus flagellatus KT.</title>
        <authorList>
            <consortium name="US DOE Joint Genome Institute"/>
            <person name="Copeland A."/>
            <person name="Lucas S."/>
            <person name="Lapidus A."/>
            <person name="Barry K."/>
            <person name="Detter J.C."/>
            <person name="Glavina del Rio T."/>
            <person name="Hammon N."/>
            <person name="Israni S."/>
            <person name="Dalin E."/>
            <person name="Tice H."/>
            <person name="Pitluck S."/>
            <person name="Brettin T."/>
            <person name="Bruce D."/>
            <person name="Han C."/>
            <person name="Tapia R."/>
            <person name="Saunders E."/>
            <person name="Gilna P."/>
            <person name="Schmutz J."/>
            <person name="Larimer F."/>
            <person name="Land M."/>
            <person name="Kyrpides N."/>
            <person name="Anderson I."/>
            <person name="Richardson P."/>
        </authorList>
    </citation>
    <scope>NUCLEOTIDE SEQUENCE [LARGE SCALE GENOMIC DNA]</scope>
    <source>
        <strain>ATCC 51484 / DSM 6875 / VKM B-1610 / KT</strain>
    </source>
</reference>